<proteinExistence type="evidence at protein level"/>
<evidence type="ECO:0000250" key="1"/>
<evidence type="ECO:0000269" key="2">
    <source>
    </source>
</evidence>
<evidence type="ECO:0000305" key="3"/>
<reference key="1">
    <citation type="journal article" date="2007" name="Toxicon">
        <title>Cytolytic peptides belonging to the brevinin-1 and brevinin-2 families isolated from the skin of the Japanese brown frog, Rana dybowskii.</title>
        <authorList>
            <person name="Conlon J.M."/>
            <person name="Kolodziejek J."/>
            <person name="Nowotny N."/>
            <person name="Leprince J."/>
            <person name="Vaudry H."/>
            <person name="Coquet L."/>
            <person name="Jouenne T."/>
            <person name="Iwamuro S."/>
        </authorList>
    </citation>
    <scope>PROTEIN SEQUENCE</scope>
    <scope>MASS SPECTROMETRY</scope>
    <source>
        <tissue>Skin secretion</tissue>
    </source>
</reference>
<sequence length="17" mass="1905">FLIGMTHGLICLISRKC</sequence>
<feature type="peptide" id="PRO_0000311597" description="Brevinin-1DYd">
    <location>
        <begin position="1"/>
        <end position="17"/>
    </location>
</feature>
<feature type="disulfide bond" evidence="1">
    <location>
        <begin position="11"/>
        <end position="17"/>
    </location>
</feature>
<name>BR1D_RANDY</name>
<keyword id="KW-0878">Amphibian defense peptide</keyword>
<keyword id="KW-0044">Antibiotic</keyword>
<keyword id="KW-0929">Antimicrobial</keyword>
<keyword id="KW-0903">Direct protein sequencing</keyword>
<keyword id="KW-1015">Disulfide bond</keyword>
<keyword id="KW-0964">Secreted</keyword>
<accession>P0C5W9</accession>
<protein>
    <recommendedName>
        <fullName>Brevinin-1DYd</fullName>
    </recommendedName>
</protein>
<dbReference type="GO" id="GO:0005576">
    <property type="term" value="C:extracellular region"/>
    <property type="evidence" value="ECO:0007669"/>
    <property type="project" value="UniProtKB-SubCell"/>
</dbReference>
<dbReference type="GO" id="GO:0042742">
    <property type="term" value="P:defense response to bacterium"/>
    <property type="evidence" value="ECO:0007669"/>
    <property type="project" value="UniProtKB-KW"/>
</dbReference>
<organism>
    <name type="scientific">Rana dybowskii</name>
    <name type="common">Dybovsky's frog</name>
    <name type="synonym">Korean brown frog</name>
    <dbReference type="NCBI Taxonomy" id="71582"/>
    <lineage>
        <taxon>Eukaryota</taxon>
        <taxon>Metazoa</taxon>
        <taxon>Chordata</taxon>
        <taxon>Craniata</taxon>
        <taxon>Vertebrata</taxon>
        <taxon>Euteleostomi</taxon>
        <taxon>Amphibia</taxon>
        <taxon>Batrachia</taxon>
        <taxon>Anura</taxon>
        <taxon>Neobatrachia</taxon>
        <taxon>Ranoidea</taxon>
        <taxon>Ranidae</taxon>
        <taxon>Rana</taxon>
        <taxon>Rana</taxon>
    </lineage>
</organism>
<comment type="function">
    <text evidence="1">Antimicrobial peptide.</text>
</comment>
<comment type="subcellular location">
    <subcellularLocation>
        <location>Secreted</location>
    </subcellularLocation>
</comment>
<comment type="tissue specificity">
    <text>Expressed by the skin glands.</text>
</comment>
<comment type="mass spectrometry" mass="1901.8" method="MALDI" evidence="2"/>
<comment type="similarity">
    <text evidence="3">Belongs to the frog skin active peptide (FSAP) family. Brevinin subfamily.</text>
</comment>